<proteinExistence type="inferred from homology"/>
<keyword id="KW-0687">Ribonucleoprotein</keyword>
<keyword id="KW-0689">Ribosomal protein</keyword>
<keyword id="KW-0694">RNA-binding</keyword>
<keyword id="KW-0699">rRNA-binding</keyword>
<evidence type="ECO:0000255" key="1">
    <source>
        <dbReference type="HAMAP-Rule" id="MF_01337"/>
    </source>
</evidence>
<evidence type="ECO:0000305" key="2"/>
<feature type="chain" id="PRO_1000142619" description="Large ribosomal subunit protein uL18">
    <location>
        <begin position="1"/>
        <end position="120"/>
    </location>
</feature>
<gene>
    <name evidence="1" type="primary">rplR</name>
    <name type="ordered locus">BCAH187_A0157</name>
</gene>
<reference key="1">
    <citation type="submission" date="2008-10" db="EMBL/GenBank/DDBJ databases">
        <title>Genome sequence of Bacillus cereus AH187.</title>
        <authorList>
            <person name="Dodson R.J."/>
            <person name="Durkin A.S."/>
            <person name="Rosovitz M.J."/>
            <person name="Rasko D.A."/>
            <person name="Kolsto A.B."/>
            <person name="Okstad O.A."/>
            <person name="Ravel J."/>
            <person name="Sutton G."/>
        </authorList>
    </citation>
    <scope>NUCLEOTIDE SEQUENCE [LARGE SCALE GENOMIC DNA]</scope>
    <source>
        <strain>AH187</strain>
    </source>
</reference>
<dbReference type="EMBL" id="CP001177">
    <property type="protein sequence ID" value="ACJ81750.1"/>
    <property type="molecule type" value="Genomic_DNA"/>
</dbReference>
<dbReference type="SMR" id="B7HQW0"/>
<dbReference type="KEGG" id="bcr:BCAH187_A0157"/>
<dbReference type="HOGENOM" id="CLU_098841_0_1_9"/>
<dbReference type="Proteomes" id="UP000002214">
    <property type="component" value="Chromosome"/>
</dbReference>
<dbReference type="GO" id="GO:0022625">
    <property type="term" value="C:cytosolic large ribosomal subunit"/>
    <property type="evidence" value="ECO:0007669"/>
    <property type="project" value="TreeGrafter"/>
</dbReference>
<dbReference type="GO" id="GO:0008097">
    <property type="term" value="F:5S rRNA binding"/>
    <property type="evidence" value="ECO:0007669"/>
    <property type="project" value="TreeGrafter"/>
</dbReference>
<dbReference type="GO" id="GO:0003735">
    <property type="term" value="F:structural constituent of ribosome"/>
    <property type="evidence" value="ECO:0007669"/>
    <property type="project" value="InterPro"/>
</dbReference>
<dbReference type="GO" id="GO:0006412">
    <property type="term" value="P:translation"/>
    <property type="evidence" value="ECO:0007669"/>
    <property type="project" value="UniProtKB-UniRule"/>
</dbReference>
<dbReference type="CDD" id="cd00432">
    <property type="entry name" value="Ribosomal_L18_L5e"/>
    <property type="match status" value="1"/>
</dbReference>
<dbReference type="FunFam" id="3.30.420.100:FF:000001">
    <property type="entry name" value="50S ribosomal protein L18"/>
    <property type="match status" value="1"/>
</dbReference>
<dbReference type="Gene3D" id="3.30.420.100">
    <property type="match status" value="1"/>
</dbReference>
<dbReference type="HAMAP" id="MF_01337_B">
    <property type="entry name" value="Ribosomal_uL18_B"/>
    <property type="match status" value="1"/>
</dbReference>
<dbReference type="InterPro" id="IPR004389">
    <property type="entry name" value="Ribosomal_uL18_bac-type"/>
</dbReference>
<dbReference type="InterPro" id="IPR005484">
    <property type="entry name" value="Ribosomal_uL18_bac/euk"/>
</dbReference>
<dbReference type="NCBIfam" id="TIGR00060">
    <property type="entry name" value="L18_bact"/>
    <property type="match status" value="1"/>
</dbReference>
<dbReference type="PANTHER" id="PTHR12899">
    <property type="entry name" value="39S RIBOSOMAL PROTEIN L18, MITOCHONDRIAL"/>
    <property type="match status" value="1"/>
</dbReference>
<dbReference type="PANTHER" id="PTHR12899:SF3">
    <property type="entry name" value="LARGE RIBOSOMAL SUBUNIT PROTEIN UL18M"/>
    <property type="match status" value="1"/>
</dbReference>
<dbReference type="Pfam" id="PF00861">
    <property type="entry name" value="Ribosomal_L18p"/>
    <property type="match status" value="1"/>
</dbReference>
<dbReference type="SUPFAM" id="SSF53137">
    <property type="entry name" value="Translational machinery components"/>
    <property type="match status" value="1"/>
</dbReference>
<organism>
    <name type="scientific">Bacillus cereus (strain AH187)</name>
    <dbReference type="NCBI Taxonomy" id="405534"/>
    <lineage>
        <taxon>Bacteria</taxon>
        <taxon>Bacillati</taxon>
        <taxon>Bacillota</taxon>
        <taxon>Bacilli</taxon>
        <taxon>Bacillales</taxon>
        <taxon>Bacillaceae</taxon>
        <taxon>Bacillus</taxon>
        <taxon>Bacillus cereus group</taxon>
    </lineage>
</organism>
<comment type="function">
    <text evidence="1">This is one of the proteins that bind and probably mediate the attachment of the 5S RNA into the large ribosomal subunit, where it forms part of the central protuberance.</text>
</comment>
<comment type="subunit">
    <text evidence="1">Part of the 50S ribosomal subunit; part of the 5S rRNA/L5/L18/L25 subcomplex. Contacts the 5S and 23S rRNAs.</text>
</comment>
<comment type="similarity">
    <text evidence="1">Belongs to the universal ribosomal protein uL18 family.</text>
</comment>
<sequence>MITKADKNATRKKRHARVRAKLTGTAERPRLNVFRSNQHIYAQVIDDVNGVTLVSASTLDKDLALNGTSNIEAATKVGESVAKRAVEKGVKEVVFDRGGYLYHGRVKALAEAAREAGLQF</sequence>
<protein>
    <recommendedName>
        <fullName evidence="1">Large ribosomal subunit protein uL18</fullName>
    </recommendedName>
    <alternativeName>
        <fullName evidence="2">50S ribosomal protein L18</fullName>
    </alternativeName>
</protein>
<accession>B7HQW0</accession>
<name>RL18_BACC7</name>